<name>RLA2_CRYST</name>
<protein>
    <recommendedName>
        <fullName evidence="3">Large ribosomal subunit protein P2</fullName>
    </recommendedName>
    <alternativeName>
        <fullName>60S acidic ribosomal protein P2</fullName>
    </alternativeName>
</protein>
<sequence>MRYVAAYMLATLGGNEKPSESDLKKILDSVGIEVEKDQLTKVINELKGKNLDEVIAEGEKKLASVPSGGGVAAAAPAAGGGGADPAEAKEEKKEEPEEESDDDMGFGLFD</sequence>
<keyword id="KW-0597">Phosphoprotein</keyword>
<keyword id="KW-0687">Ribonucleoprotein</keyword>
<keyword id="KW-0689">Ribosomal protein</keyword>
<accession>O61463</accession>
<feature type="chain" id="PRO_0000157650" description="Large ribosomal subunit protein P2">
    <location>
        <begin position="1"/>
        <end position="110"/>
    </location>
</feature>
<feature type="region of interest" description="Disordered" evidence="2">
    <location>
        <begin position="63"/>
        <end position="110"/>
    </location>
</feature>
<feature type="compositionally biased region" description="Basic and acidic residues" evidence="2">
    <location>
        <begin position="86"/>
        <end position="95"/>
    </location>
</feature>
<proteinExistence type="inferred from homology"/>
<evidence type="ECO:0000250" key="1"/>
<evidence type="ECO:0000256" key="2">
    <source>
        <dbReference type="SAM" id="MobiDB-lite"/>
    </source>
</evidence>
<evidence type="ECO:0000305" key="3"/>
<organism>
    <name type="scientific">Cryptochiton stelleri</name>
    <name type="common">Giant gumboot chiton</name>
    <dbReference type="NCBI Taxonomy" id="6655"/>
    <lineage>
        <taxon>Eukaryota</taxon>
        <taxon>Metazoa</taxon>
        <taxon>Spiralia</taxon>
        <taxon>Lophotrochozoa</taxon>
        <taxon>Mollusca</taxon>
        <taxon>Polyplacophora</taxon>
        <taxon>Neoloricata</taxon>
        <taxon>Chitonida</taxon>
        <taxon>Acanthochitonina</taxon>
        <taxon>Mopaliidae</taxon>
        <taxon>Cryptochiton</taxon>
    </lineage>
</organism>
<comment type="function">
    <text>Plays an important role in the elongation step of protein synthesis.</text>
</comment>
<comment type="subunit">
    <text>P1 and P2 exist as dimers at the large ribosomal subunit.</text>
</comment>
<comment type="PTM">
    <text evidence="1">Phosphorylated.</text>
</comment>
<comment type="similarity">
    <text evidence="3">Belongs to the eukaryotic ribosomal protein P1/P2 family.</text>
</comment>
<reference key="1">
    <citation type="journal article" date="1999" name="Mol. Mar. Biol. Biotechnol.">
        <title>Ribosomal proteins S27E, P2, and L37A from marine invertebrates.</title>
        <authorList>
            <person name="Snyder M.J."/>
        </authorList>
    </citation>
    <scope>NUCLEOTIDE SEQUENCE [MRNA]</scope>
    <source>
        <tissue>Digestive gland</tissue>
    </source>
</reference>
<dbReference type="EMBL" id="AF040713">
    <property type="protein sequence ID" value="AAC15656.1"/>
    <property type="molecule type" value="mRNA"/>
</dbReference>
<dbReference type="SMR" id="O61463"/>
<dbReference type="GO" id="GO:0022625">
    <property type="term" value="C:cytosolic large ribosomal subunit"/>
    <property type="evidence" value="ECO:0007669"/>
    <property type="project" value="InterPro"/>
</dbReference>
<dbReference type="GO" id="GO:0003735">
    <property type="term" value="F:structural constituent of ribosome"/>
    <property type="evidence" value="ECO:0007669"/>
    <property type="project" value="InterPro"/>
</dbReference>
<dbReference type="GO" id="GO:0002182">
    <property type="term" value="P:cytoplasmic translational elongation"/>
    <property type="evidence" value="ECO:0007669"/>
    <property type="project" value="InterPro"/>
</dbReference>
<dbReference type="CDD" id="cd05833">
    <property type="entry name" value="Ribosomal_P2"/>
    <property type="match status" value="1"/>
</dbReference>
<dbReference type="FunFam" id="1.10.10.1410:FF:000002">
    <property type="entry name" value="60S acidic ribosomal protein P2"/>
    <property type="match status" value="1"/>
</dbReference>
<dbReference type="Gene3D" id="1.10.10.1410">
    <property type="match status" value="1"/>
</dbReference>
<dbReference type="HAMAP" id="MF_01478">
    <property type="entry name" value="Ribosomal_L12_arch"/>
    <property type="match status" value="1"/>
</dbReference>
<dbReference type="InterPro" id="IPR038716">
    <property type="entry name" value="P1/P2_N_sf"/>
</dbReference>
<dbReference type="InterPro" id="IPR027534">
    <property type="entry name" value="Ribosomal_P1/P2"/>
</dbReference>
<dbReference type="InterPro" id="IPR044076">
    <property type="entry name" value="Ribosomal_P2"/>
</dbReference>
<dbReference type="PANTHER" id="PTHR21141">
    <property type="entry name" value="60S ACIDIC RIBOSOMAL PROTEIN FAMILY MEMBER"/>
    <property type="match status" value="1"/>
</dbReference>
<dbReference type="PANTHER" id="PTHR21141:SF5">
    <property type="entry name" value="LARGE RIBOSOMAL SUBUNIT PROTEIN P2"/>
    <property type="match status" value="1"/>
</dbReference>
<dbReference type="Pfam" id="PF00428">
    <property type="entry name" value="Ribosomal_60s"/>
    <property type="match status" value="1"/>
</dbReference>